<evidence type="ECO:0000255" key="1"/>
<evidence type="ECO:0000269" key="2">
    <source>
    </source>
</evidence>
<evidence type="ECO:0000269" key="3">
    <source>
    </source>
</evidence>
<evidence type="ECO:0000269" key="4">
    <source>
    </source>
</evidence>
<evidence type="ECO:0000269" key="5">
    <source ref="4"/>
</evidence>
<evidence type="ECO:0000303" key="6">
    <source>
    </source>
</evidence>
<evidence type="ECO:0000305" key="7"/>
<evidence type="ECO:0000305" key="8">
    <source>
    </source>
</evidence>
<evidence type="ECO:0000305" key="9">
    <source>
    </source>
</evidence>
<evidence type="ECO:0000312" key="10">
    <source>
        <dbReference type="PDB" id="3GUU"/>
    </source>
</evidence>
<evidence type="ECO:0007829" key="11">
    <source>
        <dbReference type="PDB" id="3GUU"/>
    </source>
</evidence>
<keyword id="KW-0002">3D-structure</keyword>
<keyword id="KW-1015">Disulfide bond</keyword>
<keyword id="KW-0378">Hydrolase</keyword>
<keyword id="KW-0442">Lipid degradation</keyword>
<keyword id="KW-0443">Lipid metabolism</keyword>
<keyword id="KW-0964">Secreted</keyword>
<keyword id="KW-0732">Signal</keyword>
<sequence length="462" mass="49265">MRVSLRSITSLLAAATAAVLAAPATETLDRRAALPNPYDDPFYTTPSNIGTFAKGQVIQSRKVPTDIGNANNAASFQLQYRTTNTQNEAVADVATVWIPAKPASPPKIFSYQVYEDATALDCAPSYSYLTGLDQPNKVTAVLDTPIIIGWALQQGYYVVSSDHEGFKAAFIAGYEEGMAILDGIRALKNYQNLPSDSKVALEGYSGGAHATVWATSLADSYAPELNIVGASHGGTPVSAKDTFTFLNGGPFAGFALAGVSGLSLAHPDMESFIEARLNAKGQQTLKQIRGRGFCLPQVVLTYPFLNVFSLVNDTNLLNEAPIAGILKQETVVQAEASYTVSVPKFPRFIWHAIPDEIVPYQPAATYVKEQCAKGANINFSPYPIAEHLTAEIFGLVPSLWFIKQAFDGTTPKVICGTPIPAIAGITTPSADQVLGSDLANQLRSLNGKQSAFGKPFGPITPP</sequence>
<protein>
    <recommendedName>
        <fullName evidence="6">Lipase A</fullName>
        <shortName evidence="6">CalA</shortName>
        <ecNumber evidence="2 3">3.1.1.3</ecNumber>
    </recommendedName>
</protein>
<feature type="signal peptide" evidence="1">
    <location>
        <begin position="1"/>
        <end position="21"/>
    </location>
</feature>
<feature type="chain" id="PRO_0000433085" description="Lipase A">
    <location>
        <begin position="22"/>
        <end position="462"/>
    </location>
</feature>
<feature type="active site" description="Charge relay system" evidence="8 9">
    <location>
        <position position="205"/>
    </location>
</feature>
<feature type="active site" description="Charge relay system" evidence="8 9">
    <location>
        <position position="355"/>
    </location>
</feature>
<feature type="active site" description="Charge relay system" evidence="8 9">
    <location>
        <position position="387"/>
    </location>
</feature>
<feature type="disulfide bond" evidence="4 5">
    <location>
        <begin position="122"/>
        <end position="294"/>
    </location>
</feature>
<feature type="disulfide bond" evidence="4 5">
    <location>
        <begin position="371"/>
        <end position="415"/>
    </location>
</feature>
<feature type="mutagenesis site" description="Reduces enzyme activity." evidence="3">
    <original>Y</original>
    <variation>A</variation>
    <location>
        <position position="204"/>
    </location>
</feature>
<feature type="mutagenesis site" description="Abolishes enzyme activity." evidence="3">
    <original>S</original>
    <variation>A</variation>
    <location>
        <position position="205"/>
    </location>
</feature>
<feature type="mutagenesis site" description="Reduces enzyme activity." evidence="3">
    <original>S</original>
    <variation>A</variation>
    <location>
        <position position="231"/>
    </location>
</feature>
<feature type="mutagenesis site" description="Strongly reduces enzyme activity." evidence="3">
    <original>E</original>
    <variation>A</variation>
    <location>
        <position position="319"/>
    </location>
</feature>
<feature type="mutagenesis site" description="Strongly reduces enzyme activity." evidence="3">
    <original>H</original>
    <variation>A</variation>
    <location>
        <position position="351"/>
    </location>
</feature>
<feature type="mutagenesis site" description="Strongly reduces enzyme activity." evidence="3">
    <original>D</original>
    <variation>A</variation>
    <location>
        <position position="355"/>
    </location>
</feature>
<feature type="mutagenesis site" description="Strongly reduces enzyme activity." evidence="3">
    <original>H</original>
    <variation>A</variation>
    <location>
        <position position="387"/>
    </location>
</feature>
<feature type="helix" evidence="11">
    <location>
        <begin position="37"/>
        <end position="39"/>
    </location>
</feature>
<feature type="helix" evidence="11">
    <location>
        <begin position="41"/>
        <end position="43"/>
    </location>
</feature>
<feature type="helix" evidence="11">
    <location>
        <begin position="49"/>
        <end position="51"/>
    </location>
</feature>
<feature type="strand" evidence="11">
    <location>
        <begin position="57"/>
        <end position="62"/>
    </location>
</feature>
<feature type="helix" evidence="11">
    <location>
        <begin position="66"/>
        <end position="70"/>
    </location>
</feature>
<feature type="strand" evidence="11">
    <location>
        <begin position="74"/>
        <end position="83"/>
    </location>
</feature>
<feature type="strand" evidence="11">
    <location>
        <begin position="89"/>
        <end position="98"/>
    </location>
</feature>
<feature type="strand" evidence="11">
    <location>
        <begin position="107"/>
        <end position="112"/>
    </location>
</feature>
<feature type="helix" evidence="11">
    <location>
        <begin position="120"/>
        <end position="122"/>
    </location>
</feature>
<feature type="helix" evidence="11">
    <location>
        <begin position="124"/>
        <end position="128"/>
    </location>
</feature>
<feature type="helix" evidence="11">
    <location>
        <begin position="137"/>
        <end position="140"/>
    </location>
</feature>
<feature type="helix" evidence="11">
    <location>
        <begin position="143"/>
        <end position="153"/>
    </location>
</feature>
<feature type="strand" evidence="11">
    <location>
        <begin position="157"/>
        <end position="161"/>
    </location>
</feature>
<feature type="turn" evidence="11">
    <location>
        <begin position="163"/>
        <end position="168"/>
    </location>
</feature>
<feature type="helix" evidence="11">
    <location>
        <begin position="173"/>
        <end position="190"/>
    </location>
</feature>
<feature type="strand" evidence="11">
    <location>
        <begin position="198"/>
        <end position="204"/>
    </location>
</feature>
<feature type="helix" evidence="11">
    <location>
        <begin position="206"/>
        <end position="221"/>
    </location>
</feature>
<feature type="strand" evidence="11">
    <location>
        <begin position="225"/>
        <end position="234"/>
    </location>
</feature>
<feature type="helix" evidence="11">
    <location>
        <begin position="239"/>
        <end position="246"/>
    </location>
</feature>
<feature type="helix" evidence="11">
    <location>
        <begin position="252"/>
        <end position="265"/>
    </location>
</feature>
<feature type="helix" evidence="11">
    <location>
        <begin position="267"/>
        <end position="274"/>
    </location>
</feature>
<feature type="helix" evidence="11">
    <location>
        <begin position="279"/>
        <end position="288"/>
    </location>
</feature>
<feature type="helix" evidence="11">
    <location>
        <begin position="295"/>
        <end position="301"/>
    </location>
</feature>
<feature type="helix" evidence="11">
    <location>
        <begin position="307"/>
        <end position="310"/>
    </location>
</feature>
<feature type="helix" evidence="11">
    <location>
        <begin position="316"/>
        <end position="318"/>
    </location>
</feature>
<feature type="helix" evidence="11">
    <location>
        <begin position="322"/>
        <end position="328"/>
    </location>
</feature>
<feature type="turn" evidence="11">
    <location>
        <begin position="333"/>
        <end position="335"/>
    </location>
</feature>
<feature type="strand" evidence="11">
    <location>
        <begin position="345"/>
        <end position="352"/>
    </location>
</feature>
<feature type="strand" evidence="11">
    <location>
        <begin position="356"/>
        <end position="358"/>
    </location>
</feature>
<feature type="helix" evidence="11">
    <location>
        <begin position="360"/>
        <end position="372"/>
    </location>
</feature>
<feature type="strand" evidence="11">
    <location>
        <begin position="376"/>
        <end position="384"/>
    </location>
</feature>
<feature type="helix" evidence="11">
    <location>
        <begin position="387"/>
        <end position="393"/>
    </location>
</feature>
<feature type="helix" evidence="11">
    <location>
        <begin position="395"/>
        <end position="407"/>
    </location>
</feature>
<feature type="turn" evidence="11">
    <location>
        <begin position="423"/>
        <end position="425"/>
    </location>
</feature>
<feature type="helix" evidence="11">
    <location>
        <begin position="430"/>
        <end position="434"/>
    </location>
</feature>
<feature type="helix" evidence="11">
    <location>
        <begin position="436"/>
        <end position="444"/>
    </location>
</feature>
<feature type="strand" evidence="11">
    <location>
        <begin position="453"/>
        <end position="456"/>
    </location>
</feature>
<gene>
    <name type="ORF">PaG_04054</name>
</gene>
<organism>
    <name type="scientific">Moesziomyces aphidis</name>
    <name type="common">Pseudozyma aphidis</name>
    <dbReference type="NCBI Taxonomy" id="84754"/>
    <lineage>
        <taxon>Eukaryota</taxon>
        <taxon>Fungi</taxon>
        <taxon>Dikarya</taxon>
        <taxon>Basidiomycota</taxon>
        <taxon>Ustilaginomycotina</taxon>
        <taxon>Ustilaginomycetes</taxon>
        <taxon>Ustilaginales</taxon>
        <taxon>Ustilaginaceae</taxon>
        <taxon>Moesziomyces</taxon>
    </lineage>
</organism>
<name>LIPA_MOEAP</name>
<reference key="1">
    <citation type="journal article" date="2014" name="Genome Announc.">
        <title>Genome sequence of the basidiomycetous fungus Pseudozyma aphidis DSM70725, an efficient producer of biosurfactant mannosylerythritol lipids.</title>
        <authorList>
            <person name="Lorenz S."/>
            <person name="Guenther M."/>
            <person name="Grumaz C."/>
            <person name="Rupp S."/>
            <person name="Zibek S."/>
            <person name="Sohn K."/>
        </authorList>
    </citation>
    <scope>NUCLEOTIDE SEQUENCE [LARGE SCALE GENOMIC DNA]</scope>
    <source>
        <strain>ATCC 32657 / CBS 517.83 / DSM 70725 / JCM 10318 / NBRC 10182 / NRRL Y-7954 / St-0401</strain>
    </source>
</reference>
<reference key="2">
    <citation type="journal article" date="2006" name="Appl. Microbiol. Biotechnol.">
        <title>High yield expression of lipase A from Candida antarctica in the methylotrophic yeast Pichia pastoris and its purification and characterisation.</title>
        <authorList>
            <person name="Pfeffer J."/>
            <person name="Richter S."/>
            <person name="Nieveler J."/>
            <person name="Hansen C.E."/>
            <person name="Rhlid R.B."/>
            <person name="Schmid R.D."/>
            <person name="Rusnak M."/>
        </authorList>
    </citation>
    <scope>CATALYTIC ACTIVITY</scope>
    <scope>FUNCTION</scope>
    <scope>BIOPHYSICOCHEMICAL PROPERTIES</scope>
    <scope>SUBCELLULAR LOCATION</scope>
    <source>
        <strain>ATCC 32657 / CBS 517.83 / DSM 70725 / JCM 10318 / NBRC 10182 / NRRL Y-7954 / St-0401</strain>
    </source>
</reference>
<reference key="3">
    <citation type="journal article" date="2007" name="ChemBioChem">
        <title>Prediction of the Candida antarctica lipase A protein structure by comparative modeling and site-directed mutagenesis.</title>
        <authorList>
            <person name="Kasrayan A."/>
            <person name="Bocola M."/>
            <person name="Sandstroem A.G."/>
            <person name="Laven G."/>
            <person name="Baeckvall J.E."/>
        </authorList>
    </citation>
    <scope>CATALYTIC ACTIVITY</scope>
    <scope>MUTAGENESIS OF TYR-204; SER-205; SER-231; GLU-319; HIS-351; ASP-355 AND HIS-387</scope>
    <scope>ACTIVE SITE</scope>
    <source>
        <strain>ATCC 32657 / CBS 517.83 / DSM 70725 / JCM 10318 / NBRC 10182 / NRRL Y-7954 / St-0401</strain>
    </source>
</reference>
<reference evidence="10" key="4">
    <citation type="submission" date="2009-03" db="PDB data bank">
        <title>The crystal structure of lipase A from Candida antarctica.</title>
        <authorList>
            <person name="Brandt A.-M."/>
            <person name="Li X.-G."/>
            <person name="Nymalm-Rejstrom Y."/>
            <person name="Airenne T."/>
            <person name="Kanerva L.T."/>
            <person name="Salminen T.A."/>
        </authorList>
    </citation>
    <scope>X-RAY CRYSTALLOGRAPHY (2.10 ANGSTROMS) OF 32-462</scope>
    <scope>DISULFIDE BOND</scope>
</reference>
<reference key="5">
    <citation type="journal article" date="2008" name="J. Mol. Biol.">
        <title>X-ray structure of Candida antarctica lipase A shows a novel lid structure and a likely mode of interfacial activation.</title>
        <authorList>
            <person name="Ericsson D.J."/>
            <person name="Kasrayan A."/>
            <person name="Johansson P."/>
            <person name="Bergfors T."/>
            <person name="Sandstroem A.G."/>
            <person name="Baeckvall J.E."/>
            <person name="Mowbray S.L."/>
        </authorList>
    </citation>
    <scope>X-RAY CRYSTALLOGRAPHY (2.20 ANGSTROMS) OF 32-462</scope>
    <scope>SUBUNIT</scope>
    <scope>DISULFIDE BOND</scope>
    <scope>ACTIVE SITE</scope>
    <source>
        <strain>ATCC 32657 / CBS 517.83 / DSM 70725 / JCM 10318 / NBRC 10182 / NRRL Y-7954 / St-0401</strain>
    </source>
</reference>
<accession>W3VKA4</accession>
<accession>D4PHA8</accession>
<dbReference type="EC" id="3.1.1.3" evidence="2 3"/>
<dbReference type="EMBL" id="AWNI01000013">
    <property type="protein sequence ID" value="ETS61940.1"/>
    <property type="status" value="ALT_INIT"/>
    <property type="molecule type" value="Genomic_DNA"/>
</dbReference>
<dbReference type="PDB" id="2VEO">
    <property type="method" value="X-ray"/>
    <property type="resolution" value="2.20 A"/>
    <property type="chains" value="A/B=22-462"/>
</dbReference>
<dbReference type="PDB" id="3GUU">
    <property type="method" value="X-ray"/>
    <property type="resolution" value="2.10 A"/>
    <property type="chains" value="A/B=1-462"/>
</dbReference>
<dbReference type="PDBsum" id="2VEO"/>
<dbReference type="PDBsum" id="3GUU"/>
<dbReference type="SMR" id="W3VKA4"/>
<dbReference type="ESTHER" id="canan-lipasA">
    <property type="family name" value="Fungal-Bact_LIP"/>
</dbReference>
<dbReference type="HOGENOM" id="CLU_029538_5_0_1"/>
<dbReference type="OrthoDB" id="2373480at2759"/>
<dbReference type="EvolutionaryTrace" id="W3VKA4"/>
<dbReference type="Proteomes" id="UP000019462">
    <property type="component" value="Unassembled WGS sequence"/>
</dbReference>
<dbReference type="GO" id="GO:0005576">
    <property type="term" value="C:extracellular region"/>
    <property type="evidence" value="ECO:0007669"/>
    <property type="project" value="UniProtKB-SubCell"/>
</dbReference>
<dbReference type="GO" id="GO:0004806">
    <property type="term" value="F:triacylglycerol lipase activity"/>
    <property type="evidence" value="ECO:0007669"/>
    <property type="project" value="UniProtKB-EC"/>
</dbReference>
<dbReference type="GO" id="GO:0016042">
    <property type="term" value="P:lipid catabolic process"/>
    <property type="evidence" value="ECO:0007669"/>
    <property type="project" value="UniProtKB-KW"/>
</dbReference>
<dbReference type="Gene3D" id="1.10.260.130">
    <property type="match status" value="1"/>
</dbReference>
<dbReference type="Gene3D" id="3.40.50.1820">
    <property type="entry name" value="alpha/beta hydrolase"/>
    <property type="match status" value="1"/>
</dbReference>
<dbReference type="InterPro" id="IPR029058">
    <property type="entry name" value="AB_hydrolase_fold"/>
</dbReference>
<dbReference type="InterPro" id="IPR005152">
    <property type="entry name" value="Lipase_secreted"/>
</dbReference>
<dbReference type="PANTHER" id="PTHR34853">
    <property type="match status" value="1"/>
</dbReference>
<dbReference type="PANTHER" id="PTHR34853:SF1">
    <property type="entry name" value="LIPASE 5"/>
    <property type="match status" value="1"/>
</dbReference>
<dbReference type="Pfam" id="PF03583">
    <property type="entry name" value="LIP"/>
    <property type="match status" value="1"/>
</dbReference>
<dbReference type="PIRSF" id="PIRSF029171">
    <property type="entry name" value="Esterase_LipA"/>
    <property type="match status" value="1"/>
</dbReference>
<dbReference type="SUPFAM" id="SSF53474">
    <property type="entry name" value="alpha/beta-Hydrolases"/>
    <property type="match status" value="1"/>
</dbReference>
<comment type="function">
    <text evidence="2">Hydrolyzes triglycerides, with a preference for substrates with short-chain lengths (C4 to C8). Has the highest activity with tributyrin (C4), followed by tricaproin (C6) and tricaprylin (C8). Can also hydrolyze vinylacetate (C2) and triolein (C18), but with lower efficiency. Has no activity with tripalmitin (C16).</text>
</comment>
<comment type="catalytic activity">
    <reaction evidence="2 3">
        <text>a triacylglycerol + H2O = a diacylglycerol + a fatty acid + H(+)</text>
        <dbReference type="Rhea" id="RHEA:12044"/>
        <dbReference type="ChEBI" id="CHEBI:15377"/>
        <dbReference type="ChEBI" id="CHEBI:15378"/>
        <dbReference type="ChEBI" id="CHEBI:17855"/>
        <dbReference type="ChEBI" id="CHEBI:18035"/>
        <dbReference type="ChEBI" id="CHEBI:28868"/>
        <dbReference type="EC" id="3.1.1.3"/>
    </reaction>
</comment>
<comment type="biophysicochemical properties">
    <kinetics>
        <KM evidence="2">4483 uM for tributyrin</KM>
    </kinetics>
    <phDependence>
        <text evidence="2">Optimum pH is between 7-9.</text>
    </phDependence>
    <temperatureDependence>
        <text evidence="2">Optimum temperature is 40-70 degrees Celsius.</text>
    </temperatureDependence>
</comment>
<comment type="subunit">
    <text evidence="4">Monomer.</text>
</comment>
<comment type="subcellular location">
    <subcellularLocation>
        <location evidence="2">Secreted</location>
    </subcellularLocation>
</comment>
<comment type="biotechnology">
    <text evidence="7">In addition to their capacity to hydrolyze a wide variety of natural and non-natural substrates, lipases can also catalyze the formation of ester bonds between carboxylic acids and alcohols, making them attractive biocatalysts that can contribute to the synthesis of pharmaceuticals and other fine chemicals. Sold under the name lipase novozym 735.</text>
</comment>
<comment type="similarity">
    <text evidence="7">Belongs to the AB hydrolase superfamily. Lipase family.</text>
</comment>
<comment type="sequence caution" evidence="7">
    <conflict type="erroneous initiation">
        <sequence resource="EMBL-CDS" id="ETS61940"/>
    </conflict>
    <text>Extended N-terminus.</text>
</comment>
<proteinExistence type="evidence at protein level"/>